<evidence type="ECO:0000255" key="1">
    <source>
        <dbReference type="HAMAP-Rule" id="MF_00188"/>
    </source>
</evidence>
<reference key="1">
    <citation type="journal article" date="2009" name="Genome Biol.">
        <title>Genomic and genetic analyses of diversity and plant interactions of Pseudomonas fluorescens.</title>
        <authorList>
            <person name="Silby M.W."/>
            <person name="Cerdeno-Tarraga A.M."/>
            <person name="Vernikos G.S."/>
            <person name="Giddens S.R."/>
            <person name="Jackson R.W."/>
            <person name="Preston G.M."/>
            <person name="Zhang X.-X."/>
            <person name="Moon C.D."/>
            <person name="Gehrig S.M."/>
            <person name="Godfrey S.A.C."/>
            <person name="Knight C.G."/>
            <person name="Malone J.G."/>
            <person name="Robinson Z."/>
            <person name="Spiers A.J."/>
            <person name="Harris S."/>
            <person name="Challis G.L."/>
            <person name="Yaxley A.M."/>
            <person name="Harris D."/>
            <person name="Seeger K."/>
            <person name="Murphy L."/>
            <person name="Rutter S."/>
            <person name="Squares R."/>
            <person name="Quail M.A."/>
            <person name="Saunders E."/>
            <person name="Mavromatis K."/>
            <person name="Brettin T.S."/>
            <person name="Bentley S.D."/>
            <person name="Hothersall J."/>
            <person name="Stephens E."/>
            <person name="Thomas C.M."/>
            <person name="Parkhill J."/>
            <person name="Levy S.B."/>
            <person name="Rainey P.B."/>
            <person name="Thomson N.R."/>
        </authorList>
    </citation>
    <scope>NUCLEOTIDE SEQUENCE [LARGE SCALE GENOMIC DNA]</scope>
    <source>
        <strain>SBW25</strain>
    </source>
</reference>
<keyword id="KW-0997">Cell inner membrane</keyword>
<keyword id="KW-1003">Cell membrane</keyword>
<keyword id="KW-0378">Hydrolase</keyword>
<keyword id="KW-0472">Membrane</keyword>
<keyword id="KW-0479">Metal-binding</keyword>
<keyword id="KW-0482">Metalloprotease</keyword>
<keyword id="KW-0645">Protease</keyword>
<keyword id="KW-0346">Stress response</keyword>
<keyword id="KW-0812">Transmembrane</keyword>
<keyword id="KW-1133">Transmembrane helix</keyword>
<keyword id="KW-0862">Zinc</keyword>
<sequence length="295" mass="32403">MMRILLFLATNLAVVLIASITLSLFGFNGFMAANGVDLNLNQLLVFCAVFGFAGSLFSLFISKWMAKMSTSTQVITQPRTRHEQWLLQTVEQLSREAGIKMPEVGIFPAYEANAFATGWNKNDALVAVSQGMLERFSYDEVKAVLAHEIGHVANGDMVTLALVQGVVNTFVMFFARIIGNFVDKVIFKNEGGRGIAYFVATIFAEVVLGFLASAITMWFSRKREFRADEAGARLAGTGAMIAALQHLRSEQGLPVHMPDSLTAFGINGGIKQGMARLFMSHPPLEERIDALRRRG</sequence>
<feature type="chain" id="PRO_1000203977" description="Protease HtpX">
    <location>
        <begin position="1"/>
        <end position="295"/>
    </location>
</feature>
<feature type="transmembrane region" description="Helical" evidence="1">
    <location>
        <begin position="4"/>
        <end position="24"/>
    </location>
</feature>
<feature type="transmembrane region" description="Helical" evidence="1">
    <location>
        <begin position="42"/>
        <end position="62"/>
    </location>
</feature>
<feature type="transmembrane region" description="Helical" evidence="1">
    <location>
        <begin position="158"/>
        <end position="178"/>
    </location>
</feature>
<feature type="transmembrane region" description="Helical" evidence="1">
    <location>
        <begin position="195"/>
        <end position="215"/>
    </location>
</feature>
<feature type="active site" evidence="1">
    <location>
        <position position="148"/>
    </location>
</feature>
<feature type="binding site" evidence="1">
    <location>
        <position position="147"/>
    </location>
    <ligand>
        <name>Zn(2+)</name>
        <dbReference type="ChEBI" id="CHEBI:29105"/>
        <note>catalytic</note>
    </ligand>
</feature>
<feature type="binding site" evidence="1">
    <location>
        <position position="151"/>
    </location>
    <ligand>
        <name>Zn(2+)</name>
        <dbReference type="ChEBI" id="CHEBI:29105"/>
        <note>catalytic</note>
    </ligand>
</feature>
<feature type="binding site" evidence="1">
    <location>
        <position position="224"/>
    </location>
    <ligand>
        <name>Zn(2+)</name>
        <dbReference type="ChEBI" id="CHEBI:29105"/>
        <note>catalytic</note>
    </ligand>
</feature>
<dbReference type="EC" id="3.4.24.-" evidence="1"/>
<dbReference type="EMBL" id="AM181176">
    <property type="protein sequence ID" value="CAY47977.1"/>
    <property type="molecule type" value="Genomic_DNA"/>
</dbReference>
<dbReference type="RefSeq" id="WP_012723005.1">
    <property type="nucleotide sequence ID" value="NC_012660.1"/>
</dbReference>
<dbReference type="SMR" id="C3K733"/>
<dbReference type="STRING" id="294.SRM1_03883"/>
<dbReference type="MEROPS" id="M48.002"/>
<dbReference type="GeneID" id="93463422"/>
<dbReference type="eggNOG" id="COG0501">
    <property type="taxonomic scope" value="Bacteria"/>
</dbReference>
<dbReference type="HOGENOM" id="CLU_042266_1_0_6"/>
<dbReference type="OrthoDB" id="15218at2"/>
<dbReference type="GO" id="GO:0005886">
    <property type="term" value="C:plasma membrane"/>
    <property type="evidence" value="ECO:0007669"/>
    <property type="project" value="UniProtKB-SubCell"/>
</dbReference>
<dbReference type="GO" id="GO:0004222">
    <property type="term" value="F:metalloendopeptidase activity"/>
    <property type="evidence" value="ECO:0007669"/>
    <property type="project" value="UniProtKB-UniRule"/>
</dbReference>
<dbReference type="GO" id="GO:0008270">
    <property type="term" value="F:zinc ion binding"/>
    <property type="evidence" value="ECO:0007669"/>
    <property type="project" value="UniProtKB-UniRule"/>
</dbReference>
<dbReference type="GO" id="GO:0006508">
    <property type="term" value="P:proteolysis"/>
    <property type="evidence" value="ECO:0007669"/>
    <property type="project" value="UniProtKB-KW"/>
</dbReference>
<dbReference type="CDD" id="cd07335">
    <property type="entry name" value="M48B_HtpX_like"/>
    <property type="match status" value="1"/>
</dbReference>
<dbReference type="Gene3D" id="3.30.2010.10">
    <property type="entry name" value="Metalloproteases ('zincins'), catalytic domain"/>
    <property type="match status" value="1"/>
</dbReference>
<dbReference type="HAMAP" id="MF_00188">
    <property type="entry name" value="Pept_M48_protease_HtpX"/>
    <property type="match status" value="1"/>
</dbReference>
<dbReference type="InterPro" id="IPR050083">
    <property type="entry name" value="HtpX_protease"/>
</dbReference>
<dbReference type="InterPro" id="IPR022919">
    <property type="entry name" value="Pept_M48_protease_HtpX"/>
</dbReference>
<dbReference type="InterPro" id="IPR001915">
    <property type="entry name" value="Peptidase_M48"/>
</dbReference>
<dbReference type="NCBIfam" id="NF003965">
    <property type="entry name" value="PRK05457.1"/>
    <property type="match status" value="1"/>
</dbReference>
<dbReference type="PANTHER" id="PTHR43221">
    <property type="entry name" value="PROTEASE HTPX"/>
    <property type="match status" value="1"/>
</dbReference>
<dbReference type="PANTHER" id="PTHR43221:SF1">
    <property type="entry name" value="PROTEASE HTPX"/>
    <property type="match status" value="1"/>
</dbReference>
<dbReference type="Pfam" id="PF01435">
    <property type="entry name" value="Peptidase_M48"/>
    <property type="match status" value="1"/>
</dbReference>
<proteinExistence type="inferred from homology"/>
<organism>
    <name type="scientific">Pseudomonas fluorescens (strain SBW25)</name>
    <dbReference type="NCBI Taxonomy" id="216595"/>
    <lineage>
        <taxon>Bacteria</taxon>
        <taxon>Pseudomonadati</taxon>
        <taxon>Pseudomonadota</taxon>
        <taxon>Gammaproteobacteria</taxon>
        <taxon>Pseudomonadales</taxon>
        <taxon>Pseudomonadaceae</taxon>
        <taxon>Pseudomonas</taxon>
    </lineage>
</organism>
<comment type="cofactor">
    <cofactor evidence="1">
        <name>Zn(2+)</name>
        <dbReference type="ChEBI" id="CHEBI:29105"/>
    </cofactor>
    <text evidence="1">Binds 1 zinc ion per subunit.</text>
</comment>
<comment type="subcellular location">
    <subcellularLocation>
        <location evidence="1">Cell inner membrane</location>
        <topology evidence="1">Multi-pass membrane protein</topology>
    </subcellularLocation>
</comment>
<comment type="similarity">
    <text evidence="1">Belongs to the peptidase M48B family.</text>
</comment>
<name>HTPX_PSEFS</name>
<protein>
    <recommendedName>
        <fullName evidence="1">Protease HtpX</fullName>
        <ecNumber evidence="1">3.4.24.-</ecNumber>
    </recommendedName>
    <alternativeName>
        <fullName evidence="1">Heat shock protein HtpX</fullName>
    </alternativeName>
</protein>
<accession>C3K733</accession>
<gene>
    <name evidence="1" type="primary">htpX</name>
    <name type="ordered locus">PFLU_1730</name>
</gene>